<proteinExistence type="evidence at protein level"/>
<reference key="1">
    <citation type="journal article" date="1987" name="Nucleic Acids Res.">
        <title>Nucleotide sequence of the melA gene, coding for alpha-galactosidase in Escherichia coli K-12.</title>
        <authorList>
            <person name="Liljestroem P.L."/>
            <person name="Liljestroem P."/>
        </authorList>
    </citation>
    <scope>NUCLEOTIDE SEQUENCE [GENOMIC DNA]</scope>
    <source>
        <strain>K12</strain>
    </source>
</reference>
<reference key="2">
    <citation type="journal article" date="1995" name="Nucleic Acids Res.">
        <title>Analysis of the Escherichia coli genome VI: DNA sequence of the region from 92.8 through 100 minutes.</title>
        <authorList>
            <person name="Burland V.D."/>
            <person name="Plunkett G. III"/>
            <person name="Sofia H.J."/>
            <person name="Daniels D.L."/>
            <person name="Blattner F.R."/>
        </authorList>
    </citation>
    <scope>NUCLEOTIDE SEQUENCE [LARGE SCALE GENOMIC DNA]</scope>
    <source>
        <strain>K12 / MG1655 / ATCC 47076</strain>
    </source>
</reference>
<reference key="3">
    <citation type="journal article" date="1997" name="Science">
        <title>The complete genome sequence of Escherichia coli K-12.</title>
        <authorList>
            <person name="Blattner F.R."/>
            <person name="Plunkett G. III"/>
            <person name="Bloch C.A."/>
            <person name="Perna N.T."/>
            <person name="Burland V."/>
            <person name="Riley M."/>
            <person name="Collado-Vides J."/>
            <person name="Glasner J.D."/>
            <person name="Rode C.K."/>
            <person name="Mayhew G.F."/>
            <person name="Gregor J."/>
            <person name="Davis N.W."/>
            <person name="Kirkpatrick H.A."/>
            <person name="Goeden M.A."/>
            <person name="Rose D.J."/>
            <person name="Mau B."/>
            <person name="Shao Y."/>
        </authorList>
    </citation>
    <scope>NUCLEOTIDE SEQUENCE [LARGE SCALE GENOMIC DNA]</scope>
    <source>
        <strain>K12 / MG1655 / ATCC 47076</strain>
    </source>
</reference>
<reference key="4">
    <citation type="journal article" date="2006" name="Mol. Syst. Biol.">
        <title>Highly accurate genome sequences of Escherichia coli K-12 strains MG1655 and W3110.</title>
        <authorList>
            <person name="Hayashi K."/>
            <person name="Morooka N."/>
            <person name="Yamamoto Y."/>
            <person name="Fujita K."/>
            <person name="Isono K."/>
            <person name="Choi S."/>
            <person name="Ohtsubo E."/>
            <person name="Baba T."/>
            <person name="Wanner B.L."/>
            <person name="Mori H."/>
            <person name="Horiuchi T."/>
        </authorList>
    </citation>
    <scope>NUCLEOTIDE SEQUENCE [LARGE SCALE GENOMIC DNA]</scope>
    <source>
        <strain>K12 / W3110 / ATCC 27325 / DSM 5911</strain>
    </source>
</reference>
<reference key="5">
    <citation type="journal article" date="1984" name="Biochem. Biophys. Res. Commun.">
        <title>Nucleotide sequence of the promoter region of the melibiose operon of Escherichia coli.</title>
        <authorList>
            <person name="Shimamoto T."/>
            <person name="Yazyu H."/>
            <person name="Futai M."/>
            <person name="Tsuchiya T."/>
        </authorList>
    </citation>
    <scope>NUCLEOTIDE SEQUENCE [GENOMIC DNA] OF 1-52</scope>
</reference>
<reference key="6">
    <citation type="journal article" date="1988" name="Biochem. Biophys. Res. Commun.">
        <title>Purification and analysis of the structure of alpha-galactosidase from Escherichia coli.</title>
        <authorList>
            <person name="Nagao Y."/>
            <person name="Nakada T."/>
            <person name="Imoto M."/>
            <person name="Shimamoto T."/>
            <person name="Sakai S."/>
            <person name="Tsuda M."/>
            <person name="Tsuchiya T."/>
        </authorList>
    </citation>
    <scope>PROTEIN SEQUENCE OF 1-20</scope>
    <scope>COFACTOR</scope>
    <scope>SUBUNIT</scope>
</reference>
<dbReference type="EC" id="3.2.1.22"/>
<dbReference type="EMBL" id="X04894">
    <property type="protein sequence ID" value="CAA28581.1"/>
    <property type="molecule type" value="Genomic_DNA"/>
</dbReference>
<dbReference type="EMBL" id="K01490">
    <property type="protein sequence ID" value="AAA24149.1"/>
    <property type="status" value="ALT_INIT"/>
    <property type="molecule type" value="Genomic_DNA"/>
</dbReference>
<dbReference type="EMBL" id="U14003">
    <property type="protein sequence ID" value="AAA97019.1"/>
    <property type="molecule type" value="Genomic_DNA"/>
</dbReference>
<dbReference type="EMBL" id="U00096">
    <property type="protein sequence ID" value="AAC77080.1"/>
    <property type="molecule type" value="Genomic_DNA"/>
</dbReference>
<dbReference type="EMBL" id="AP009048">
    <property type="protein sequence ID" value="BAE78121.1"/>
    <property type="molecule type" value="Genomic_DNA"/>
</dbReference>
<dbReference type="PIR" id="A26571">
    <property type="entry name" value="GBECAG"/>
</dbReference>
<dbReference type="RefSeq" id="NP_418543.1">
    <property type="nucleotide sequence ID" value="NC_000913.3"/>
</dbReference>
<dbReference type="RefSeq" id="WP_000986601.1">
    <property type="nucleotide sequence ID" value="NZ_SSZK01000018.1"/>
</dbReference>
<dbReference type="SMR" id="P06720"/>
<dbReference type="BioGRID" id="4262685">
    <property type="interactions" value="11"/>
</dbReference>
<dbReference type="DIP" id="DIP-10179N"/>
<dbReference type="FunCoup" id="P06720">
    <property type="interactions" value="112"/>
</dbReference>
<dbReference type="IntAct" id="P06720">
    <property type="interactions" value="3"/>
</dbReference>
<dbReference type="STRING" id="511145.b4119"/>
<dbReference type="ChEMBL" id="CHEMBL3696"/>
<dbReference type="CAZy" id="GH4">
    <property type="family name" value="Glycoside Hydrolase Family 4"/>
</dbReference>
<dbReference type="jPOST" id="P06720"/>
<dbReference type="PaxDb" id="511145-b4119"/>
<dbReference type="EnsemblBacteria" id="AAC77080">
    <property type="protein sequence ID" value="AAC77080"/>
    <property type="gene ID" value="b4119"/>
</dbReference>
<dbReference type="GeneID" id="948636"/>
<dbReference type="KEGG" id="ecj:JW4080"/>
<dbReference type="KEGG" id="eco:b4119"/>
<dbReference type="KEGG" id="ecoc:C3026_22260"/>
<dbReference type="PATRIC" id="fig|1411691.4.peg.2581"/>
<dbReference type="EchoBASE" id="EB0572"/>
<dbReference type="eggNOG" id="COG1486">
    <property type="taxonomic scope" value="Bacteria"/>
</dbReference>
<dbReference type="HOGENOM" id="CLU_045951_1_1_6"/>
<dbReference type="InParanoid" id="P06720"/>
<dbReference type="OMA" id="EHNAEYH"/>
<dbReference type="OrthoDB" id="9767022at2"/>
<dbReference type="PhylomeDB" id="P06720"/>
<dbReference type="BioCyc" id="EcoCyc:ALPHAGALACTOSID-MONOMER"/>
<dbReference type="BioCyc" id="MetaCyc:ALPHAGALACTOSID-MONOMER"/>
<dbReference type="PRO" id="PR:P06720"/>
<dbReference type="Proteomes" id="UP000000625">
    <property type="component" value="Chromosome"/>
</dbReference>
<dbReference type="GO" id="GO:0005829">
    <property type="term" value="C:cytosol"/>
    <property type="evidence" value="ECO:0000314"/>
    <property type="project" value="EcoCyc"/>
</dbReference>
<dbReference type="GO" id="GO:0004557">
    <property type="term" value="F:alpha-galactosidase activity"/>
    <property type="evidence" value="ECO:0000314"/>
    <property type="project" value="EcoCyc"/>
</dbReference>
<dbReference type="GO" id="GO:0030145">
    <property type="term" value="F:manganese ion binding"/>
    <property type="evidence" value="ECO:0000314"/>
    <property type="project" value="EcoCyc"/>
</dbReference>
<dbReference type="GO" id="GO:0070403">
    <property type="term" value="F:NAD+ binding"/>
    <property type="evidence" value="ECO:0000314"/>
    <property type="project" value="EcoCyc"/>
</dbReference>
<dbReference type="GO" id="GO:0016616">
    <property type="term" value="F:oxidoreductase activity, acting on the CH-OH group of donors, NAD or NADP as acceptor"/>
    <property type="evidence" value="ECO:0007669"/>
    <property type="project" value="InterPro"/>
</dbReference>
<dbReference type="GO" id="GO:0005995">
    <property type="term" value="P:melibiose catabolic process"/>
    <property type="evidence" value="ECO:0000315"/>
    <property type="project" value="EcoCyc"/>
</dbReference>
<dbReference type="CDD" id="cd05297">
    <property type="entry name" value="GH4_alpha_glucosidase_galactosidase"/>
    <property type="match status" value="1"/>
</dbReference>
<dbReference type="FunFam" id="3.90.1820.10:FF:000001">
    <property type="entry name" value="Alpha-galactosidase"/>
    <property type="match status" value="1"/>
</dbReference>
<dbReference type="Gene3D" id="3.90.1820.10">
    <property type="entry name" value="AglA-like glucosidase"/>
    <property type="match status" value="1"/>
</dbReference>
<dbReference type="InterPro" id="IPR053715">
    <property type="entry name" value="GH4_Enzyme_sf"/>
</dbReference>
<dbReference type="InterPro" id="IPR019802">
    <property type="entry name" value="GlycHydrolase_4_CS"/>
</dbReference>
<dbReference type="InterPro" id="IPR001088">
    <property type="entry name" value="Glyco_hydro_4"/>
</dbReference>
<dbReference type="InterPro" id="IPR022616">
    <property type="entry name" value="Glyco_hydro_4_C"/>
</dbReference>
<dbReference type="InterPro" id="IPR015955">
    <property type="entry name" value="Lactate_DH/Glyco_Ohase_4_C"/>
</dbReference>
<dbReference type="InterPro" id="IPR036291">
    <property type="entry name" value="NAD(P)-bd_dom_sf"/>
</dbReference>
<dbReference type="NCBIfam" id="NF011657">
    <property type="entry name" value="PRK15076.1"/>
    <property type="match status" value="1"/>
</dbReference>
<dbReference type="PANTHER" id="PTHR32092">
    <property type="entry name" value="6-PHOSPHO-BETA-GLUCOSIDASE-RELATED"/>
    <property type="match status" value="1"/>
</dbReference>
<dbReference type="PANTHER" id="PTHR32092:SF6">
    <property type="entry name" value="ALPHA-GALACTOSIDASE"/>
    <property type="match status" value="1"/>
</dbReference>
<dbReference type="Pfam" id="PF02056">
    <property type="entry name" value="Glyco_hydro_4"/>
    <property type="match status" value="1"/>
</dbReference>
<dbReference type="Pfam" id="PF11975">
    <property type="entry name" value="Glyco_hydro_4C"/>
    <property type="match status" value="1"/>
</dbReference>
<dbReference type="PRINTS" id="PR00732">
    <property type="entry name" value="GLHYDRLASE4"/>
</dbReference>
<dbReference type="SUPFAM" id="SSF56327">
    <property type="entry name" value="LDH C-terminal domain-like"/>
    <property type="match status" value="1"/>
</dbReference>
<dbReference type="SUPFAM" id="SSF51735">
    <property type="entry name" value="NAD(P)-binding Rossmann-fold domains"/>
    <property type="match status" value="1"/>
</dbReference>
<dbReference type="PROSITE" id="PS01324">
    <property type="entry name" value="GLYCOSYL_HYDROL_F4"/>
    <property type="match status" value="1"/>
</dbReference>
<feature type="chain" id="PRO_0000169852" description="Alpha-galactosidase">
    <location>
        <begin position="1"/>
        <end position="451"/>
    </location>
</feature>
<feature type="active site" description="Proton donor" evidence="1">
    <location>
        <position position="174"/>
    </location>
</feature>
<feature type="binding site" evidence="1">
    <location>
        <begin position="5"/>
        <end position="71"/>
    </location>
    <ligand>
        <name>NAD(+)</name>
        <dbReference type="ChEBI" id="CHEBI:57540"/>
    </ligand>
</feature>
<feature type="binding site" evidence="1">
    <location>
        <position position="151"/>
    </location>
    <ligand>
        <name>substrate</name>
    </ligand>
</feature>
<feature type="binding site" evidence="1">
    <location>
        <position position="173"/>
    </location>
    <ligand>
        <name>Mn(2+)</name>
        <dbReference type="ChEBI" id="CHEBI:29035"/>
    </ligand>
</feature>
<feature type="binding site" evidence="1">
    <location>
        <position position="203"/>
    </location>
    <ligand>
        <name>Mn(2+)</name>
        <dbReference type="ChEBI" id="CHEBI:29035"/>
    </ligand>
</feature>
<feature type="binding site" evidence="1">
    <location>
        <position position="287"/>
    </location>
    <ligand>
        <name>substrate</name>
    </ligand>
</feature>
<name>AGAL_ECOLI</name>
<gene>
    <name type="primary">melA</name>
    <name type="synonym">mel-7</name>
    <name type="ordered locus">b4119</name>
    <name type="ordered locus">JW4080</name>
</gene>
<organism>
    <name type="scientific">Escherichia coli (strain K12)</name>
    <dbReference type="NCBI Taxonomy" id="83333"/>
    <lineage>
        <taxon>Bacteria</taxon>
        <taxon>Pseudomonadati</taxon>
        <taxon>Pseudomonadota</taxon>
        <taxon>Gammaproteobacteria</taxon>
        <taxon>Enterobacterales</taxon>
        <taxon>Enterobacteriaceae</taxon>
        <taxon>Escherichia</taxon>
    </lineage>
</organism>
<accession>P06720</accession>
<accession>Q2M6I5</accession>
<keyword id="KW-0119">Carbohydrate metabolism</keyword>
<keyword id="KW-0903">Direct protein sequencing</keyword>
<keyword id="KW-0326">Glycosidase</keyword>
<keyword id="KW-0378">Hydrolase</keyword>
<keyword id="KW-0464">Manganese</keyword>
<keyword id="KW-0479">Metal-binding</keyword>
<keyword id="KW-0520">NAD</keyword>
<keyword id="KW-1185">Reference proteome</keyword>
<sequence>MMSAPKITFIGAGSTIFVKNILGDVFHREALKTAHIALMDIDPTRLEESHIVVRKLMDSAGASGKITCHTQQKEALEDADFVVVAFQIGGYEPCTVTDFEVCKRHGLEQTIADTLGPGGIMRALRTIPHLWQICEDMTEVCPDATMLNYVNPMAMNTWAMYARYPHIKQVGLCHSVQGTAEELARDLNIDPATLRYRCAGINHMAFYLELERKTADGSYVNLYPELLAAYEAGQAPKPNIHGNTRCQNIVRYEMFKKLGYFVTESSEHFAEYTPWFIKPGREDLIERYKVPLDEYPKRCVEQLANWHKELEEYKKASRIDIKPSREYASTIMNAIWTGEPSVIYGNVRNDGLIDNLPQGCCVEVACLVDANGIQPTKVGTLPSHLAALMQTNINVQTLLTEAILTENRDRVYHAAMMDPHTAAVLGIDEIYALVDDLIAAHGDWLPGWLHR</sequence>
<evidence type="ECO:0000250" key="1"/>
<evidence type="ECO:0000269" key="2">
    <source>
    </source>
</evidence>
<evidence type="ECO:0000305" key="3"/>
<comment type="catalytic activity">
    <reaction>
        <text>Hydrolysis of terminal, non-reducing alpha-D-galactose residues in alpha-D-galactosides, including galactose oligosaccharides, galactomannans and galactolipids.</text>
        <dbReference type="EC" id="3.2.1.22"/>
    </reaction>
</comment>
<comment type="cofactor">
    <cofactor evidence="2">
        <name>NAD(+)</name>
        <dbReference type="ChEBI" id="CHEBI:57540"/>
    </cofactor>
    <text evidence="2">Binds 1 NAD(+) per subunit.</text>
</comment>
<comment type="cofactor">
    <cofactor evidence="2">
        <name>Mn(2+)</name>
        <dbReference type="ChEBI" id="CHEBI:29035"/>
    </cofactor>
    <text evidence="2">Binds 1 Mn(2+) ion per subunit.</text>
</comment>
<comment type="subunit">
    <text evidence="2">Homodimer.</text>
</comment>
<comment type="similarity">
    <text evidence="3">Belongs to the glycosyl hydrolase 4 family.</text>
</comment>
<comment type="sequence caution" evidence="3">
    <conflict type="erroneous initiation">
        <sequence resource="EMBL-CDS" id="AAA24149"/>
    </conflict>
</comment>
<protein>
    <recommendedName>
        <fullName>Alpha-galactosidase</fullName>
        <ecNumber>3.2.1.22</ecNumber>
    </recommendedName>
    <alternativeName>
        <fullName>Melibiase</fullName>
    </alternativeName>
</protein>